<name>ODPA_DICDI</name>
<sequence>MLSNFLKVNSKALGHIRTFASKSGEIKHNFKKADTYLCDGPSDSTVTNKDELISFFTEMSRFRRLETVCDGLYKKKLIRGFCHLYTGQEAVCAGLESAITKDDHIITAYRDHTYMLSRGATPEEIFAELLMKETGCSKGKGGSMHMFTKNFYGGNGIVGAQCPLGAGIAFAQKYNKTGNVCLAMYGDGAANQGQLFEAFNMASLWKLPVIFICENNKYGMGTSQKRSTAGHDFYTRGHYVAGLKVDGMDVFAVKEAGKYAAEWCRAGNGPIILEMDTYRYVGHSMSDPGITYRTREEVNHVRQTRDPIENIRQIILDNKIATEDQLAAIEETVRDEMEKASEKAIAAPLPQARELFTNVYLQEVPVRGVEFVNSFKP</sequence>
<accession>Q54C70</accession>
<keyword id="KW-0460">Magnesium</keyword>
<keyword id="KW-0479">Metal-binding</keyword>
<keyword id="KW-0496">Mitochondrion</keyword>
<keyword id="KW-0560">Oxidoreductase</keyword>
<keyword id="KW-0670">Pyruvate</keyword>
<keyword id="KW-1185">Reference proteome</keyword>
<keyword id="KW-0786">Thiamine pyrophosphate</keyword>
<keyword id="KW-0809">Transit peptide</keyword>
<reference key="1">
    <citation type="journal article" date="2005" name="Nature">
        <title>The genome of the social amoeba Dictyostelium discoideum.</title>
        <authorList>
            <person name="Eichinger L."/>
            <person name="Pachebat J.A."/>
            <person name="Gloeckner G."/>
            <person name="Rajandream M.A."/>
            <person name="Sucgang R."/>
            <person name="Berriman M."/>
            <person name="Song J."/>
            <person name="Olsen R."/>
            <person name="Szafranski K."/>
            <person name="Xu Q."/>
            <person name="Tunggal B."/>
            <person name="Kummerfeld S."/>
            <person name="Madera M."/>
            <person name="Konfortov B.A."/>
            <person name="Rivero F."/>
            <person name="Bankier A.T."/>
            <person name="Lehmann R."/>
            <person name="Hamlin N."/>
            <person name="Davies R."/>
            <person name="Gaudet P."/>
            <person name="Fey P."/>
            <person name="Pilcher K."/>
            <person name="Chen G."/>
            <person name="Saunders D."/>
            <person name="Sodergren E.J."/>
            <person name="Davis P."/>
            <person name="Kerhornou A."/>
            <person name="Nie X."/>
            <person name="Hall N."/>
            <person name="Anjard C."/>
            <person name="Hemphill L."/>
            <person name="Bason N."/>
            <person name="Farbrother P."/>
            <person name="Desany B."/>
            <person name="Just E."/>
            <person name="Morio T."/>
            <person name="Rost R."/>
            <person name="Churcher C.M."/>
            <person name="Cooper J."/>
            <person name="Haydock S."/>
            <person name="van Driessche N."/>
            <person name="Cronin A."/>
            <person name="Goodhead I."/>
            <person name="Muzny D.M."/>
            <person name="Mourier T."/>
            <person name="Pain A."/>
            <person name="Lu M."/>
            <person name="Harper D."/>
            <person name="Lindsay R."/>
            <person name="Hauser H."/>
            <person name="James K.D."/>
            <person name="Quiles M."/>
            <person name="Madan Babu M."/>
            <person name="Saito T."/>
            <person name="Buchrieser C."/>
            <person name="Wardroper A."/>
            <person name="Felder M."/>
            <person name="Thangavelu M."/>
            <person name="Johnson D."/>
            <person name="Knights A."/>
            <person name="Loulseged H."/>
            <person name="Mungall K.L."/>
            <person name="Oliver K."/>
            <person name="Price C."/>
            <person name="Quail M.A."/>
            <person name="Urushihara H."/>
            <person name="Hernandez J."/>
            <person name="Rabbinowitsch E."/>
            <person name="Steffen D."/>
            <person name="Sanders M."/>
            <person name="Ma J."/>
            <person name="Kohara Y."/>
            <person name="Sharp S."/>
            <person name="Simmonds M.N."/>
            <person name="Spiegler S."/>
            <person name="Tivey A."/>
            <person name="Sugano S."/>
            <person name="White B."/>
            <person name="Walker D."/>
            <person name="Woodward J.R."/>
            <person name="Winckler T."/>
            <person name="Tanaka Y."/>
            <person name="Shaulsky G."/>
            <person name="Schleicher M."/>
            <person name="Weinstock G.M."/>
            <person name="Rosenthal A."/>
            <person name="Cox E.C."/>
            <person name="Chisholm R.L."/>
            <person name="Gibbs R.A."/>
            <person name="Loomis W.F."/>
            <person name="Platzer M."/>
            <person name="Kay R.R."/>
            <person name="Williams J.G."/>
            <person name="Dear P.H."/>
            <person name="Noegel A.A."/>
            <person name="Barrell B.G."/>
            <person name="Kuspa A."/>
        </authorList>
    </citation>
    <scope>NUCLEOTIDE SEQUENCE [LARGE SCALE GENOMIC DNA]</scope>
    <source>
        <strain>AX4</strain>
    </source>
</reference>
<reference key="2">
    <citation type="journal article" date="2006" name="Mol. Cell. Proteomics">
        <title>Proteomics fingerprinting of phagosome maturation and evidence for the role of a Galpha during uptake.</title>
        <authorList>
            <person name="Gotthardt D."/>
            <person name="Blancheteau V."/>
            <person name="Bosserhoff A."/>
            <person name="Ruppert T."/>
            <person name="Delorenzi M."/>
            <person name="Soldati T."/>
        </authorList>
    </citation>
    <scope>IDENTIFICATION BY MASS SPECTROMETRY [LARGE SCALE ANALYSIS]</scope>
    <source>
        <strain>AX2</strain>
    </source>
</reference>
<evidence type="ECO:0000250" key="1"/>
<evidence type="ECO:0000250" key="2">
    <source>
        <dbReference type="UniProtKB" id="P08559"/>
    </source>
</evidence>
<evidence type="ECO:0000255" key="3"/>
<feature type="transit peptide" description="Mitochondrion" evidence="3">
    <location>
        <begin position="1"/>
        <end position="26"/>
    </location>
</feature>
<feature type="chain" id="PRO_0000327983" description="Pyruvate dehydrogenase E1 component subunit alpha, mitochondrial">
    <location>
        <begin position="27"/>
        <end position="377"/>
    </location>
</feature>
<feature type="binding site" evidence="2">
    <location>
        <position position="83"/>
    </location>
    <ligand>
        <name>pyruvate</name>
        <dbReference type="ChEBI" id="CHEBI:15361"/>
    </ligand>
</feature>
<feature type="binding site" evidence="2">
    <location>
        <position position="109"/>
    </location>
    <ligand>
        <name>pyruvate</name>
        <dbReference type="ChEBI" id="CHEBI:15361"/>
    </ligand>
</feature>
<feature type="binding site" evidence="2">
    <location>
        <position position="109"/>
    </location>
    <ligand>
        <name>thiamine diphosphate</name>
        <dbReference type="ChEBI" id="CHEBI:58937"/>
        <note>ligand shared with beta subunit</note>
    </ligand>
</feature>
<feature type="binding site" evidence="2">
    <location>
        <position position="110"/>
    </location>
    <ligand>
        <name>pyruvate</name>
        <dbReference type="ChEBI" id="CHEBI:15361"/>
    </ligand>
</feature>
<feature type="binding site" evidence="2">
    <location>
        <position position="110"/>
    </location>
    <ligand>
        <name>thiamine diphosphate</name>
        <dbReference type="ChEBI" id="CHEBI:58937"/>
        <note>ligand shared with beta subunit</note>
    </ligand>
</feature>
<feature type="binding site" evidence="2">
    <location>
        <position position="156"/>
    </location>
    <ligand>
        <name>pyruvate</name>
        <dbReference type="ChEBI" id="CHEBI:15361"/>
    </ligand>
</feature>
<feature type="binding site" evidence="2">
    <location>
        <position position="156"/>
    </location>
    <ligand>
        <name>thiamine diphosphate</name>
        <dbReference type="ChEBI" id="CHEBI:58937"/>
        <note>ligand shared with beta subunit</note>
    </ligand>
</feature>
<feature type="binding site" evidence="2">
    <location>
        <position position="158"/>
    </location>
    <ligand>
        <name>pyruvate</name>
        <dbReference type="ChEBI" id="CHEBI:15361"/>
    </ligand>
</feature>
<feature type="binding site" evidence="2">
    <location>
        <position position="158"/>
    </location>
    <ligand>
        <name>thiamine diphosphate</name>
        <dbReference type="ChEBI" id="CHEBI:58937"/>
        <note>ligand shared with beta subunit</note>
    </ligand>
</feature>
<feature type="binding site" evidence="2">
    <location>
        <position position="187"/>
    </location>
    <ligand>
        <name>Mg(2+)</name>
        <dbReference type="ChEBI" id="CHEBI:18420"/>
    </ligand>
</feature>
<feature type="binding site" evidence="2">
    <location>
        <position position="187"/>
    </location>
    <ligand>
        <name>pyruvate</name>
        <dbReference type="ChEBI" id="CHEBI:15361"/>
    </ligand>
</feature>
<feature type="binding site" evidence="2">
    <location>
        <position position="187"/>
    </location>
    <ligand>
        <name>thiamine diphosphate</name>
        <dbReference type="ChEBI" id="CHEBI:58937"/>
        <note>ligand shared with beta subunit</note>
    </ligand>
</feature>
<feature type="binding site" evidence="2">
    <location>
        <position position="188"/>
    </location>
    <ligand>
        <name>pyruvate</name>
        <dbReference type="ChEBI" id="CHEBI:15361"/>
    </ligand>
</feature>
<feature type="binding site" evidence="2">
    <location>
        <position position="188"/>
    </location>
    <ligand>
        <name>thiamine diphosphate</name>
        <dbReference type="ChEBI" id="CHEBI:58937"/>
        <note>ligand shared with beta subunit</note>
    </ligand>
</feature>
<feature type="binding site" evidence="2">
    <location>
        <position position="189"/>
    </location>
    <ligand>
        <name>pyruvate</name>
        <dbReference type="ChEBI" id="CHEBI:15361"/>
    </ligand>
</feature>
<feature type="binding site" evidence="2">
    <location>
        <position position="189"/>
    </location>
    <ligand>
        <name>thiamine diphosphate</name>
        <dbReference type="ChEBI" id="CHEBI:58937"/>
        <note>ligand shared with beta subunit</note>
    </ligand>
</feature>
<feature type="binding site" evidence="2">
    <location>
        <position position="216"/>
    </location>
    <ligand>
        <name>Mg(2+)</name>
        <dbReference type="ChEBI" id="CHEBI:18420"/>
    </ligand>
</feature>
<feature type="binding site" evidence="2">
    <location>
        <position position="216"/>
    </location>
    <ligand>
        <name>pyruvate</name>
        <dbReference type="ChEBI" id="CHEBI:15361"/>
    </ligand>
</feature>
<feature type="binding site" evidence="2">
    <location>
        <position position="216"/>
    </location>
    <ligand>
        <name>thiamine diphosphate</name>
        <dbReference type="ChEBI" id="CHEBI:58937"/>
        <note>ligand shared with beta subunit</note>
    </ligand>
</feature>
<feature type="binding site" evidence="2">
    <location>
        <position position="218"/>
    </location>
    <ligand>
        <name>Mg(2+)</name>
        <dbReference type="ChEBI" id="CHEBI:18420"/>
    </ligand>
</feature>
<feature type="binding site" evidence="2">
    <location>
        <position position="218"/>
    </location>
    <ligand>
        <name>pyruvate</name>
        <dbReference type="ChEBI" id="CHEBI:15361"/>
    </ligand>
</feature>
<feature type="binding site" evidence="2">
    <location>
        <position position="283"/>
    </location>
    <ligand>
        <name>thiamine diphosphate</name>
        <dbReference type="ChEBI" id="CHEBI:58937"/>
        <note>ligand shared with beta subunit</note>
    </ligand>
</feature>
<dbReference type="EC" id="1.2.4.1"/>
<dbReference type="EMBL" id="AAFI02000199">
    <property type="protein sequence ID" value="EAL60849.1"/>
    <property type="molecule type" value="Genomic_DNA"/>
</dbReference>
<dbReference type="RefSeq" id="XP_629349.1">
    <property type="nucleotide sequence ID" value="XM_629347.1"/>
</dbReference>
<dbReference type="SMR" id="Q54C70"/>
<dbReference type="FunCoup" id="Q54C70">
    <property type="interactions" value="392"/>
</dbReference>
<dbReference type="STRING" id="44689.Q54C70"/>
<dbReference type="PaxDb" id="44689-DDB0230193"/>
<dbReference type="EnsemblProtists" id="EAL60849">
    <property type="protein sequence ID" value="EAL60849"/>
    <property type="gene ID" value="DDB_G0292994"/>
</dbReference>
<dbReference type="GeneID" id="8629073"/>
<dbReference type="KEGG" id="ddi:DDB_G0292994"/>
<dbReference type="dictyBase" id="DDB_G0292994">
    <property type="gene designation" value="pdhA"/>
</dbReference>
<dbReference type="VEuPathDB" id="AmoebaDB:DDB_G0292994"/>
<dbReference type="eggNOG" id="KOG0225">
    <property type="taxonomic scope" value="Eukaryota"/>
</dbReference>
<dbReference type="HOGENOM" id="CLU_029393_5_2_1"/>
<dbReference type="InParanoid" id="Q54C70"/>
<dbReference type="OMA" id="LGYEMPC"/>
<dbReference type="PhylomeDB" id="Q54C70"/>
<dbReference type="Reactome" id="R-DDI-9861559">
    <property type="pathway name" value="PDH complex synthesizes acetyl-CoA from PYR"/>
</dbReference>
<dbReference type="PRO" id="PR:Q54C70"/>
<dbReference type="Proteomes" id="UP000002195">
    <property type="component" value="Chromosome 6"/>
</dbReference>
<dbReference type="GO" id="GO:0005759">
    <property type="term" value="C:mitochondrial matrix"/>
    <property type="evidence" value="ECO:0007669"/>
    <property type="project" value="UniProtKB-SubCell"/>
</dbReference>
<dbReference type="GO" id="GO:0045335">
    <property type="term" value="C:phagocytic vesicle"/>
    <property type="evidence" value="ECO:0007005"/>
    <property type="project" value="dictyBase"/>
</dbReference>
<dbReference type="GO" id="GO:0045254">
    <property type="term" value="C:pyruvate dehydrogenase complex"/>
    <property type="evidence" value="ECO:0000250"/>
    <property type="project" value="dictyBase"/>
</dbReference>
<dbReference type="GO" id="GO:0046872">
    <property type="term" value="F:metal ion binding"/>
    <property type="evidence" value="ECO:0007669"/>
    <property type="project" value="UniProtKB-KW"/>
</dbReference>
<dbReference type="GO" id="GO:0004739">
    <property type="term" value="F:pyruvate dehydrogenase (acetyl-transferring) activity"/>
    <property type="evidence" value="ECO:0000250"/>
    <property type="project" value="dictyBase"/>
</dbReference>
<dbReference type="GO" id="GO:0006086">
    <property type="term" value="P:pyruvate decarboxylation to acetyl-CoA"/>
    <property type="evidence" value="ECO:0000250"/>
    <property type="project" value="dictyBase"/>
</dbReference>
<dbReference type="CDD" id="cd02000">
    <property type="entry name" value="TPP_E1_PDC_ADC_BCADC"/>
    <property type="match status" value="1"/>
</dbReference>
<dbReference type="FunFam" id="3.40.50.970:FF:000013">
    <property type="entry name" value="Pyruvate dehydrogenase E1 component subunit alpha"/>
    <property type="match status" value="1"/>
</dbReference>
<dbReference type="Gene3D" id="3.40.50.970">
    <property type="match status" value="1"/>
</dbReference>
<dbReference type="InterPro" id="IPR001017">
    <property type="entry name" value="DH_E1"/>
</dbReference>
<dbReference type="InterPro" id="IPR050642">
    <property type="entry name" value="PDH_E1_Alpha_Subunit"/>
</dbReference>
<dbReference type="InterPro" id="IPR017597">
    <property type="entry name" value="Pyrv_DH_E1_asu_subgrp-y"/>
</dbReference>
<dbReference type="InterPro" id="IPR029061">
    <property type="entry name" value="THDP-binding"/>
</dbReference>
<dbReference type="NCBIfam" id="TIGR03182">
    <property type="entry name" value="PDH_E1_alph_y"/>
    <property type="match status" value="1"/>
</dbReference>
<dbReference type="PANTHER" id="PTHR11516:SF60">
    <property type="entry name" value="PYRUVATE DEHYDROGENASE E1 COMPONENT SUBUNIT ALPHA"/>
    <property type="match status" value="1"/>
</dbReference>
<dbReference type="PANTHER" id="PTHR11516">
    <property type="entry name" value="PYRUVATE DEHYDROGENASE E1 COMPONENT, ALPHA SUBUNIT BACTERIAL AND ORGANELLAR"/>
    <property type="match status" value="1"/>
</dbReference>
<dbReference type="Pfam" id="PF00676">
    <property type="entry name" value="E1_dh"/>
    <property type="match status" value="1"/>
</dbReference>
<dbReference type="SUPFAM" id="SSF52518">
    <property type="entry name" value="Thiamin diphosphate-binding fold (THDP-binding)"/>
    <property type="match status" value="1"/>
</dbReference>
<protein>
    <recommendedName>
        <fullName>Pyruvate dehydrogenase E1 component subunit alpha, mitochondrial</fullName>
        <shortName>PDHE1-A</shortName>
        <ecNumber>1.2.4.1</ecNumber>
    </recommendedName>
</protein>
<proteinExistence type="evidence at protein level"/>
<gene>
    <name type="primary">pdhA</name>
    <name type="ORF">DDB_G0292994</name>
</gene>
<organism>
    <name type="scientific">Dictyostelium discoideum</name>
    <name type="common">Social amoeba</name>
    <dbReference type="NCBI Taxonomy" id="44689"/>
    <lineage>
        <taxon>Eukaryota</taxon>
        <taxon>Amoebozoa</taxon>
        <taxon>Evosea</taxon>
        <taxon>Eumycetozoa</taxon>
        <taxon>Dictyostelia</taxon>
        <taxon>Dictyosteliales</taxon>
        <taxon>Dictyosteliaceae</taxon>
        <taxon>Dictyostelium</taxon>
    </lineage>
</organism>
<comment type="function">
    <text evidence="1">The pyruvate dehydrogenase complex catalyzes the overall conversion of pyruvate to acetyl-CoA and CO(2). It contains multiple copies of three enzymatic components: pyruvate dehydrogenase (E1), dihydrolipoamide acetyltransferase (E2) and lipoamide dehydrogenase (E3) (By similarity).</text>
</comment>
<comment type="catalytic activity">
    <reaction>
        <text>N(6)-[(R)-lipoyl]-L-lysyl-[protein] + pyruvate + H(+) = N(6)-[(R)-S(8)-acetyldihydrolipoyl]-L-lysyl-[protein] + CO2</text>
        <dbReference type="Rhea" id="RHEA:19189"/>
        <dbReference type="Rhea" id="RHEA-COMP:10474"/>
        <dbReference type="Rhea" id="RHEA-COMP:10478"/>
        <dbReference type="ChEBI" id="CHEBI:15361"/>
        <dbReference type="ChEBI" id="CHEBI:15378"/>
        <dbReference type="ChEBI" id="CHEBI:16526"/>
        <dbReference type="ChEBI" id="CHEBI:83099"/>
        <dbReference type="ChEBI" id="CHEBI:83111"/>
        <dbReference type="EC" id="1.2.4.1"/>
    </reaction>
</comment>
<comment type="cofactor">
    <cofactor evidence="2">
        <name>thiamine diphosphate</name>
        <dbReference type="ChEBI" id="CHEBI:58937"/>
    </cofactor>
    <cofactor evidence="2">
        <name>Mg(2+)</name>
        <dbReference type="ChEBI" id="CHEBI:18420"/>
    </cofactor>
</comment>
<comment type="activity regulation">
    <text evidence="1">E1 activity is regulated by phosphorylation (inactivation) and dephosphorylation (activation) of the alpha subunit.</text>
</comment>
<comment type="subunit">
    <text evidence="1">Tetramer of 2 alpha and 2 beta subunits.</text>
</comment>
<comment type="subcellular location">
    <subcellularLocation>
        <location evidence="1">Mitochondrion matrix</location>
    </subcellularLocation>
</comment>